<protein>
    <recommendedName>
        <fullName evidence="1">Glycine cleavage system H protein</fullName>
    </recommendedName>
</protein>
<reference key="1">
    <citation type="submission" date="2007-11" db="EMBL/GenBank/DDBJ databases">
        <authorList>
            <consortium name="The Salmonella enterica serovar Arizonae Genome Sequencing Project"/>
            <person name="McClelland M."/>
            <person name="Sanderson E.K."/>
            <person name="Porwollik S."/>
            <person name="Spieth J."/>
            <person name="Clifton W.S."/>
            <person name="Fulton R."/>
            <person name="Chunyan W."/>
            <person name="Wollam A."/>
            <person name="Shah N."/>
            <person name="Pepin K."/>
            <person name="Bhonagiri V."/>
            <person name="Nash W."/>
            <person name="Johnson M."/>
            <person name="Thiruvilangam P."/>
            <person name="Wilson R."/>
        </authorList>
    </citation>
    <scope>NUCLEOTIDE SEQUENCE [LARGE SCALE GENOMIC DNA]</scope>
    <source>
        <strain>ATCC BAA-731 / CDC346-86 / RSK2980</strain>
    </source>
</reference>
<comment type="function">
    <text evidence="1">The glycine cleavage system catalyzes the degradation of glycine. The H protein shuttles the methylamine group of glycine from the P protein to the T protein.</text>
</comment>
<comment type="cofactor">
    <cofactor evidence="1">
        <name>(R)-lipoate</name>
        <dbReference type="ChEBI" id="CHEBI:83088"/>
    </cofactor>
    <text evidence="1">Binds 1 lipoyl cofactor covalently.</text>
</comment>
<comment type="subunit">
    <text evidence="1">The glycine cleavage system is composed of four proteins: P, T, L and H.</text>
</comment>
<comment type="similarity">
    <text evidence="1">Belongs to the GcvH family.</text>
</comment>
<evidence type="ECO:0000255" key="1">
    <source>
        <dbReference type="HAMAP-Rule" id="MF_00272"/>
    </source>
</evidence>
<evidence type="ECO:0000255" key="2">
    <source>
        <dbReference type="PROSITE-ProRule" id="PRU01066"/>
    </source>
</evidence>
<gene>
    <name evidence="1" type="primary">gcvH</name>
    <name type="ordered locus">SARI_04597</name>
</gene>
<name>GCSH_SALAR</name>
<accession>A9MRH1</accession>
<sequence length="129" mass="13868">MSNVPAELKYSKEHEWLRKEADGTYTVGITEHAQELLGDMVFVDLPEVGATVSAGDDCAVAESVKAASDIYAPVSGEIVAVNDALSDSPELVNSEPYADGWIFKIKASNESELESLLDATAYEALLEDE</sequence>
<proteinExistence type="inferred from homology"/>
<feature type="chain" id="PRO_1000078737" description="Glycine cleavage system H protein">
    <location>
        <begin position="1"/>
        <end position="129"/>
    </location>
</feature>
<feature type="domain" description="Lipoyl-binding" evidence="2">
    <location>
        <begin position="24"/>
        <end position="106"/>
    </location>
</feature>
<feature type="modified residue" description="N6-lipoyllysine" evidence="1">
    <location>
        <position position="65"/>
    </location>
</feature>
<dbReference type="EMBL" id="CP000880">
    <property type="protein sequence ID" value="ABX24369.1"/>
    <property type="molecule type" value="Genomic_DNA"/>
</dbReference>
<dbReference type="SMR" id="A9MRH1"/>
<dbReference type="STRING" id="41514.SARI_04597"/>
<dbReference type="KEGG" id="ses:SARI_04597"/>
<dbReference type="HOGENOM" id="CLU_097408_2_1_6"/>
<dbReference type="Proteomes" id="UP000002084">
    <property type="component" value="Chromosome"/>
</dbReference>
<dbReference type="GO" id="GO:0005829">
    <property type="term" value="C:cytosol"/>
    <property type="evidence" value="ECO:0007669"/>
    <property type="project" value="TreeGrafter"/>
</dbReference>
<dbReference type="GO" id="GO:0005960">
    <property type="term" value="C:glycine cleavage complex"/>
    <property type="evidence" value="ECO:0007669"/>
    <property type="project" value="InterPro"/>
</dbReference>
<dbReference type="GO" id="GO:0019464">
    <property type="term" value="P:glycine decarboxylation via glycine cleavage system"/>
    <property type="evidence" value="ECO:0007669"/>
    <property type="project" value="UniProtKB-UniRule"/>
</dbReference>
<dbReference type="CDD" id="cd06848">
    <property type="entry name" value="GCS_H"/>
    <property type="match status" value="1"/>
</dbReference>
<dbReference type="FunFam" id="2.40.50.100:FF:000011">
    <property type="entry name" value="Glycine cleavage system H protein"/>
    <property type="match status" value="1"/>
</dbReference>
<dbReference type="Gene3D" id="2.40.50.100">
    <property type="match status" value="1"/>
</dbReference>
<dbReference type="HAMAP" id="MF_00272">
    <property type="entry name" value="GcvH"/>
    <property type="match status" value="1"/>
</dbReference>
<dbReference type="InterPro" id="IPR003016">
    <property type="entry name" value="2-oxoA_DH_lipoyl-BS"/>
</dbReference>
<dbReference type="InterPro" id="IPR000089">
    <property type="entry name" value="Biotin_lipoyl"/>
</dbReference>
<dbReference type="InterPro" id="IPR002930">
    <property type="entry name" value="GCV_H"/>
</dbReference>
<dbReference type="InterPro" id="IPR033753">
    <property type="entry name" value="GCV_H/Fam206"/>
</dbReference>
<dbReference type="InterPro" id="IPR017453">
    <property type="entry name" value="GCV_H_sub"/>
</dbReference>
<dbReference type="InterPro" id="IPR011053">
    <property type="entry name" value="Single_hybrid_motif"/>
</dbReference>
<dbReference type="NCBIfam" id="TIGR00527">
    <property type="entry name" value="gcvH"/>
    <property type="match status" value="1"/>
</dbReference>
<dbReference type="NCBIfam" id="NF002270">
    <property type="entry name" value="PRK01202.1"/>
    <property type="match status" value="1"/>
</dbReference>
<dbReference type="PANTHER" id="PTHR11715">
    <property type="entry name" value="GLYCINE CLEAVAGE SYSTEM H PROTEIN"/>
    <property type="match status" value="1"/>
</dbReference>
<dbReference type="PANTHER" id="PTHR11715:SF3">
    <property type="entry name" value="GLYCINE CLEAVAGE SYSTEM H PROTEIN-RELATED"/>
    <property type="match status" value="1"/>
</dbReference>
<dbReference type="Pfam" id="PF01597">
    <property type="entry name" value="GCV_H"/>
    <property type="match status" value="1"/>
</dbReference>
<dbReference type="SUPFAM" id="SSF51230">
    <property type="entry name" value="Single hybrid motif"/>
    <property type="match status" value="1"/>
</dbReference>
<dbReference type="PROSITE" id="PS50968">
    <property type="entry name" value="BIOTINYL_LIPOYL"/>
    <property type="match status" value="1"/>
</dbReference>
<dbReference type="PROSITE" id="PS00189">
    <property type="entry name" value="LIPOYL"/>
    <property type="match status" value="1"/>
</dbReference>
<keyword id="KW-0450">Lipoyl</keyword>
<keyword id="KW-1185">Reference proteome</keyword>
<organism>
    <name type="scientific">Salmonella arizonae (strain ATCC BAA-731 / CDC346-86 / RSK2980)</name>
    <dbReference type="NCBI Taxonomy" id="41514"/>
    <lineage>
        <taxon>Bacteria</taxon>
        <taxon>Pseudomonadati</taxon>
        <taxon>Pseudomonadota</taxon>
        <taxon>Gammaproteobacteria</taxon>
        <taxon>Enterobacterales</taxon>
        <taxon>Enterobacteriaceae</taxon>
        <taxon>Salmonella</taxon>
    </lineage>
</organism>